<comment type="function">
    <text evidence="1">Catalyzes the reversible conversion of ribose-5-phosphate to ribulose 5-phosphate.</text>
</comment>
<comment type="catalytic activity">
    <reaction evidence="1">
        <text>aldehydo-D-ribose 5-phosphate = D-ribulose 5-phosphate</text>
        <dbReference type="Rhea" id="RHEA:14657"/>
        <dbReference type="ChEBI" id="CHEBI:58121"/>
        <dbReference type="ChEBI" id="CHEBI:58273"/>
        <dbReference type="EC" id="5.3.1.6"/>
    </reaction>
</comment>
<comment type="pathway">
    <text evidence="1">Carbohydrate degradation; pentose phosphate pathway; D-ribose 5-phosphate from D-ribulose 5-phosphate (non-oxidative stage): step 1/1.</text>
</comment>
<comment type="subunit">
    <text evidence="1">Homodimer.</text>
</comment>
<comment type="similarity">
    <text evidence="1">Belongs to the ribose 5-phosphate isomerase family.</text>
</comment>
<gene>
    <name evidence="1" type="primary">rpiA</name>
    <name type="ordered locus">CGSHiGG_05560</name>
</gene>
<sequence>MNQLEMKKLAAQAALQYVKADTIVGVGSGSTVNCFIEALGTIKDKIQGAVAASKESEELLRKQGIEVFNANDVSSLDIYVDGADEINPQKMMIKGGGAALTREKIVAALAKKFICIVDSSKQVDVLGSTFPLPVEVIPMARSQVGRKLVALGGSPEYREDVVTDNGNVILDVHNFSILNPVEMEKELNNVSGVVTNGIFALRGADVVIVGTPEGAKIID</sequence>
<proteinExistence type="inferred from homology"/>
<protein>
    <recommendedName>
        <fullName evidence="1">Ribose-5-phosphate isomerase A</fullName>
        <ecNumber evidence="1">5.3.1.6</ecNumber>
    </recommendedName>
    <alternativeName>
        <fullName evidence="1">Phosphoriboisomerase A</fullName>
        <shortName evidence="1">PRI</shortName>
    </alternativeName>
</protein>
<keyword id="KW-0413">Isomerase</keyword>
<accession>A5UGX5</accession>
<feature type="chain" id="PRO_1000016929" description="Ribose-5-phosphate isomerase A">
    <location>
        <begin position="1"/>
        <end position="219"/>
    </location>
</feature>
<feature type="active site" description="Proton acceptor" evidence="1">
    <location>
        <position position="103"/>
    </location>
</feature>
<feature type="binding site" evidence="1">
    <location>
        <begin position="28"/>
        <end position="31"/>
    </location>
    <ligand>
        <name>substrate</name>
    </ligand>
</feature>
<feature type="binding site" evidence="1">
    <location>
        <begin position="81"/>
        <end position="84"/>
    </location>
    <ligand>
        <name>substrate</name>
    </ligand>
</feature>
<feature type="binding site" evidence="1">
    <location>
        <begin position="94"/>
        <end position="97"/>
    </location>
    <ligand>
        <name>substrate</name>
    </ligand>
</feature>
<feature type="binding site" evidence="1">
    <location>
        <position position="121"/>
    </location>
    <ligand>
        <name>substrate</name>
    </ligand>
</feature>
<organism>
    <name type="scientific">Haemophilus influenzae (strain PittGG)</name>
    <dbReference type="NCBI Taxonomy" id="374931"/>
    <lineage>
        <taxon>Bacteria</taxon>
        <taxon>Pseudomonadati</taxon>
        <taxon>Pseudomonadota</taxon>
        <taxon>Gammaproteobacteria</taxon>
        <taxon>Pasteurellales</taxon>
        <taxon>Pasteurellaceae</taxon>
        <taxon>Haemophilus</taxon>
    </lineage>
</organism>
<dbReference type="EC" id="5.3.1.6" evidence="1"/>
<dbReference type="EMBL" id="CP000672">
    <property type="protein sequence ID" value="ABR00031.1"/>
    <property type="molecule type" value="Genomic_DNA"/>
</dbReference>
<dbReference type="SMR" id="A5UGX5"/>
<dbReference type="KEGG" id="hiq:CGSHiGG_05560"/>
<dbReference type="HOGENOM" id="CLU_056590_1_1_6"/>
<dbReference type="UniPathway" id="UPA00115">
    <property type="reaction ID" value="UER00412"/>
</dbReference>
<dbReference type="Proteomes" id="UP000001990">
    <property type="component" value="Chromosome"/>
</dbReference>
<dbReference type="GO" id="GO:0005829">
    <property type="term" value="C:cytosol"/>
    <property type="evidence" value="ECO:0007669"/>
    <property type="project" value="TreeGrafter"/>
</dbReference>
<dbReference type="GO" id="GO:0004751">
    <property type="term" value="F:ribose-5-phosphate isomerase activity"/>
    <property type="evidence" value="ECO:0007669"/>
    <property type="project" value="UniProtKB-UniRule"/>
</dbReference>
<dbReference type="GO" id="GO:0006014">
    <property type="term" value="P:D-ribose metabolic process"/>
    <property type="evidence" value="ECO:0007669"/>
    <property type="project" value="TreeGrafter"/>
</dbReference>
<dbReference type="GO" id="GO:0009052">
    <property type="term" value="P:pentose-phosphate shunt, non-oxidative branch"/>
    <property type="evidence" value="ECO:0007669"/>
    <property type="project" value="UniProtKB-UniRule"/>
</dbReference>
<dbReference type="CDD" id="cd01398">
    <property type="entry name" value="RPI_A"/>
    <property type="match status" value="1"/>
</dbReference>
<dbReference type="FunFam" id="3.30.70.260:FF:000004">
    <property type="entry name" value="Ribose-5-phosphate isomerase A"/>
    <property type="match status" value="1"/>
</dbReference>
<dbReference type="FunFam" id="3.40.50.1360:FF:000001">
    <property type="entry name" value="Ribose-5-phosphate isomerase A"/>
    <property type="match status" value="1"/>
</dbReference>
<dbReference type="Gene3D" id="3.30.70.260">
    <property type="match status" value="1"/>
</dbReference>
<dbReference type="Gene3D" id="3.40.50.1360">
    <property type="match status" value="1"/>
</dbReference>
<dbReference type="HAMAP" id="MF_00170">
    <property type="entry name" value="Rib_5P_isom_A"/>
    <property type="match status" value="1"/>
</dbReference>
<dbReference type="InterPro" id="IPR037171">
    <property type="entry name" value="NagB/RpiA_transferase-like"/>
</dbReference>
<dbReference type="InterPro" id="IPR020672">
    <property type="entry name" value="Ribose5P_isomerase_typA_subgr"/>
</dbReference>
<dbReference type="InterPro" id="IPR004788">
    <property type="entry name" value="Ribose5P_isomerase_type_A"/>
</dbReference>
<dbReference type="NCBIfam" id="NF001924">
    <property type="entry name" value="PRK00702.1"/>
    <property type="match status" value="1"/>
</dbReference>
<dbReference type="NCBIfam" id="TIGR00021">
    <property type="entry name" value="rpiA"/>
    <property type="match status" value="1"/>
</dbReference>
<dbReference type="PANTHER" id="PTHR11934">
    <property type="entry name" value="RIBOSE-5-PHOSPHATE ISOMERASE"/>
    <property type="match status" value="1"/>
</dbReference>
<dbReference type="PANTHER" id="PTHR11934:SF0">
    <property type="entry name" value="RIBOSE-5-PHOSPHATE ISOMERASE"/>
    <property type="match status" value="1"/>
</dbReference>
<dbReference type="Pfam" id="PF06026">
    <property type="entry name" value="Rib_5-P_isom_A"/>
    <property type="match status" value="1"/>
</dbReference>
<dbReference type="SUPFAM" id="SSF75445">
    <property type="entry name" value="D-ribose-5-phosphate isomerase (RpiA), lid domain"/>
    <property type="match status" value="1"/>
</dbReference>
<dbReference type="SUPFAM" id="SSF100950">
    <property type="entry name" value="NagB/RpiA/CoA transferase-like"/>
    <property type="match status" value="1"/>
</dbReference>
<name>RPIA_HAEIG</name>
<evidence type="ECO:0000255" key="1">
    <source>
        <dbReference type="HAMAP-Rule" id="MF_00170"/>
    </source>
</evidence>
<reference key="1">
    <citation type="journal article" date="2007" name="Genome Biol.">
        <title>Characterization and modeling of the Haemophilus influenzae core and supragenomes based on the complete genomic sequences of Rd and 12 clinical nontypeable strains.</title>
        <authorList>
            <person name="Hogg J.S."/>
            <person name="Hu F.Z."/>
            <person name="Janto B."/>
            <person name="Boissy R."/>
            <person name="Hayes J."/>
            <person name="Keefe R."/>
            <person name="Post J.C."/>
            <person name="Ehrlich G.D."/>
        </authorList>
    </citation>
    <scope>NUCLEOTIDE SEQUENCE [LARGE SCALE GENOMIC DNA]</scope>
    <source>
        <strain>PittGG</strain>
    </source>
</reference>